<reference key="1">
    <citation type="journal article" date="2002" name="Nucleic Acids Res.">
        <title>Genome sequence of Shigella flexneri 2a: insights into pathogenicity through comparison with genomes of Escherichia coli K12 and O157.</title>
        <authorList>
            <person name="Jin Q."/>
            <person name="Yuan Z."/>
            <person name="Xu J."/>
            <person name="Wang Y."/>
            <person name="Shen Y."/>
            <person name="Lu W."/>
            <person name="Wang J."/>
            <person name="Liu H."/>
            <person name="Yang J."/>
            <person name="Yang F."/>
            <person name="Zhang X."/>
            <person name="Zhang J."/>
            <person name="Yang G."/>
            <person name="Wu H."/>
            <person name="Qu D."/>
            <person name="Dong J."/>
            <person name="Sun L."/>
            <person name="Xue Y."/>
            <person name="Zhao A."/>
            <person name="Gao Y."/>
            <person name="Zhu J."/>
            <person name="Kan B."/>
            <person name="Ding K."/>
            <person name="Chen S."/>
            <person name="Cheng H."/>
            <person name="Yao Z."/>
            <person name="He B."/>
            <person name="Chen R."/>
            <person name="Ma D."/>
            <person name="Qiang B."/>
            <person name="Wen Y."/>
            <person name="Hou Y."/>
            <person name="Yu J."/>
        </authorList>
    </citation>
    <scope>NUCLEOTIDE SEQUENCE [LARGE SCALE GENOMIC DNA]</scope>
    <source>
        <strain>301 / Serotype 2a</strain>
    </source>
</reference>
<reference key="2">
    <citation type="journal article" date="2003" name="Infect. Immun.">
        <title>Complete genome sequence and comparative genomics of Shigella flexneri serotype 2a strain 2457T.</title>
        <authorList>
            <person name="Wei J."/>
            <person name="Goldberg M.B."/>
            <person name="Burland V."/>
            <person name="Venkatesan M.M."/>
            <person name="Deng W."/>
            <person name="Fournier G."/>
            <person name="Mayhew G.F."/>
            <person name="Plunkett G. III"/>
            <person name="Rose D.J."/>
            <person name="Darling A."/>
            <person name="Mau B."/>
            <person name="Perna N.T."/>
            <person name="Payne S.M."/>
            <person name="Runyen-Janecky L.J."/>
            <person name="Zhou S."/>
            <person name="Schwartz D.C."/>
            <person name="Blattner F.R."/>
        </authorList>
    </citation>
    <scope>NUCLEOTIDE SEQUENCE [LARGE SCALE GENOMIC DNA]</scope>
    <source>
        <strain>ATCC 700930 / 2457T / Serotype 2a</strain>
    </source>
</reference>
<organism>
    <name type="scientific">Shigella flexneri</name>
    <dbReference type="NCBI Taxonomy" id="623"/>
    <lineage>
        <taxon>Bacteria</taxon>
        <taxon>Pseudomonadati</taxon>
        <taxon>Pseudomonadota</taxon>
        <taxon>Gammaproteobacteria</taxon>
        <taxon>Enterobacterales</taxon>
        <taxon>Enterobacteriaceae</taxon>
        <taxon>Shigella</taxon>
    </lineage>
</organism>
<protein>
    <recommendedName>
        <fullName>Uncharacterized HTH-type transcriptional regulator YihL</fullName>
    </recommendedName>
</protein>
<name>YIHL_SHIFL</name>
<evidence type="ECO:0000255" key="1">
    <source>
        <dbReference type="PROSITE-ProRule" id="PRU00307"/>
    </source>
</evidence>
<proteinExistence type="predicted"/>
<accession>P0ACN1</accession>
<accession>P32133</accession>
<gene>
    <name type="primary">yihL</name>
    <name type="ordered locus">SF3942</name>
    <name type="ordered locus">S3804</name>
</gene>
<keyword id="KW-0238">DNA-binding</keyword>
<keyword id="KW-1185">Reference proteome</keyword>
<keyword id="KW-0804">Transcription</keyword>
<keyword id="KW-0805">Transcription regulation</keyword>
<sequence length="236" mass="26939">MAENQSTVENAKEKLDRWLKDGITTPGGKLPSERELGELLGIKRMTLRQALLNLEAESKIFRKDRKGWFVTQPRFNYSPELSASFQRAAIEQGREPSWGFTEKNRTSDIPETLAPLIAVTPSTELYRITGWGALEGHKVFYHETYINPEVAPGFIEQLENHSFSAVWEKCYQKETVVKKLIFKPVRMPGDISKYLGGSAGMPAILIEKHRADQQGNIVQIDIEYWRFEAVDLIINL</sequence>
<feature type="chain" id="PRO_0000050685" description="Uncharacterized HTH-type transcriptional regulator YihL">
    <location>
        <begin position="1"/>
        <end position="236"/>
    </location>
</feature>
<feature type="domain" description="HTH gntR-type" evidence="1">
    <location>
        <begin position="5"/>
        <end position="73"/>
    </location>
</feature>
<feature type="DNA-binding region" description="H-T-H motif" evidence="1">
    <location>
        <begin position="33"/>
        <end position="52"/>
    </location>
</feature>
<dbReference type="EMBL" id="AE005674">
    <property type="protein sequence ID" value="AAN45377.1"/>
    <property type="molecule type" value="Genomic_DNA"/>
</dbReference>
<dbReference type="EMBL" id="AE014073">
    <property type="protein sequence ID" value="AAP18821.1"/>
    <property type="molecule type" value="Genomic_DNA"/>
</dbReference>
<dbReference type="RefSeq" id="NP_709670.1">
    <property type="nucleotide sequence ID" value="NC_004337.2"/>
</dbReference>
<dbReference type="RefSeq" id="WP_000829798.1">
    <property type="nucleotide sequence ID" value="NZ_WPGW01000069.1"/>
</dbReference>
<dbReference type="SMR" id="P0ACN1"/>
<dbReference type="STRING" id="198214.SF3942"/>
<dbReference type="PaxDb" id="198214-SF3942"/>
<dbReference type="GeneID" id="1025416"/>
<dbReference type="KEGG" id="sfl:SF3942"/>
<dbReference type="KEGG" id="sfx:S3804"/>
<dbReference type="PATRIC" id="fig|198214.7.peg.4646"/>
<dbReference type="HOGENOM" id="CLU_063236_2_2_6"/>
<dbReference type="Proteomes" id="UP000001006">
    <property type="component" value="Chromosome"/>
</dbReference>
<dbReference type="Proteomes" id="UP000002673">
    <property type="component" value="Chromosome"/>
</dbReference>
<dbReference type="GO" id="GO:0003677">
    <property type="term" value="F:DNA binding"/>
    <property type="evidence" value="ECO:0007669"/>
    <property type="project" value="UniProtKB-KW"/>
</dbReference>
<dbReference type="GO" id="GO:0003700">
    <property type="term" value="F:DNA-binding transcription factor activity"/>
    <property type="evidence" value="ECO:0007669"/>
    <property type="project" value="InterPro"/>
</dbReference>
<dbReference type="GO" id="GO:0045892">
    <property type="term" value="P:negative regulation of DNA-templated transcription"/>
    <property type="evidence" value="ECO:0007669"/>
    <property type="project" value="TreeGrafter"/>
</dbReference>
<dbReference type="CDD" id="cd07377">
    <property type="entry name" value="WHTH_GntR"/>
    <property type="match status" value="1"/>
</dbReference>
<dbReference type="FunFam" id="1.10.10.10:FF:000351">
    <property type="entry name" value="GntR family transcriptional regulator"/>
    <property type="match status" value="1"/>
</dbReference>
<dbReference type="FunFam" id="3.40.1410.10:FF:000007">
    <property type="entry name" value="GntR family transcriptional regulator"/>
    <property type="match status" value="1"/>
</dbReference>
<dbReference type="Gene3D" id="3.40.1410.10">
    <property type="entry name" value="Chorismate lyase-like"/>
    <property type="match status" value="1"/>
</dbReference>
<dbReference type="Gene3D" id="1.10.10.10">
    <property type="entry name" value="Winged helix-like DNA-binding domain superfamily/Winged helix DNA-binding domain"/>
    <property type="match status" value="1"/>
</dbReference>
<dbReference type="InterPro" id="IPR050679">
    <property type="entry name" value="Bact_HTH_transcr_reg"/>
</dbReference>
<dbReference type="InterPro" id="IPR028978">
    <property type="entry name" value="Chorismate_lyase_/UTRA_dom_sf"/>
</dbReference>
<dbReference type="InterPro" id="IPR000524">
    <property type="entry name" value="Tscrpt_reg_HTH_GntR"/>
</dbReference>
<dbReference type="InterPro" id="IPR011663">
    <property type="entry name" value="UTRA"/>
</dbReference>
<dbReference type="InterPro" id="IPR036388">
    <property type="entry name" value="WH-like_DNA-bd_sf"/>
</dbReference>
<dbReference type="InterPro" id="IPR036390">
    <property type="entry name" value="WH_DNA-bd_sf"/>
</dbReference>
<dbReference type="PANTHER" id="PTHR44846">
    <property type="entry name" value="MANNOSYL-D-GLYCERATE TRANSPORT/METABOLISM SYSTEM REPRESSOR MNGR-RELATED"/>
    <property type="match status" value="1"/>
</dbReference>
<dbReference type="PANTHER" id="PTHR44846:SF7">
    <property type="entry name" value="TRANSCRIPTIONAL REGULATOR OF 2-AMINOETHYLPHOSPHONATE DEGRADATION OPERONS-RELATED"/>
    <property type="match status" value="1"/>
</dbReference>
<dbReference type="Pfam" id="PF00392">
    <property type="entry name" value="GntR"/>
    <property type="match status" value="1"/>
</dbReference>
<dbReference type="Pfam" id="PF07702">
    <property type="entry name" value="UTRA"/>
    <property type="match status" value="1"/>
</dbReference>
<dbReference type="PRINTS" id="PR00035">
    <property type="entry name" value="HTHGNTR"/>
</dbReference>
<dbReference type="SMART" id="SM00345">
    <property type="entry name" value="HTH_GNTR"/>
    <property type="match status" value="1"/>
</dbReference>
<dbReference type="SMART" id="SM00866">
    <property type="entry name" value="UTRA"/>
    <property type="match status" value="1"/>
</dbReference>
<dbReference type="SUPFAM" id="SSF64288">
    <property type="entry name" value="Chorismate lyase-like"/>
    <property type="match status" value="1"/>
</dbReference>
<dbReference type="SUPFAM" id="SSF46785">
    <property type="entry name" value="Winged helix' DNA-binding domain"/>
    <property type="match status" value="1"/>
</dbReference>
<dbReference type="PROSITE" id="PS50949">
    <property type="entry name" value="HTH_GNTR"/>
    <property type="match status" value="1"/>
</dbReference>